<protein>
    <recommendedName>
        <fullName evidence="1">Trans-aconitate 2-methyltransferase</fullName>
        <ecNumber evidence="1">2.1.1.144</ecNumber>
    </recommendedName>
</protein>
<keyword id="KW-0963">Cytoplasm</keyword>
<keyword id="KW-0489">Methyltransferase</keyword>
<keyword id="KW-1185">Reference proteome</keyword>
<keyword id="KW-0949">S-adenosyl-L-methionine</keyword>
<keyword id="KW-0808">Transferase</keyword>
<accession>B5ZUL2</accession>
<reference key="1">
    <citation type="journal article" date="2010" name="Stand. Genomic Sci.">
        <title>Complete genome sequence of Rhizobium leguminosarum bv trifolii strain WSM2304, an effective microsymbiont of the South American clover Trifolium polymorphum.</title>
        <authorList>
            <person name="Reeve W."/>
            <person name="O'Hara G."/>
            <person name="Chain P."/>
            <person name="Ardley J."/>
            <person name="Brau L."/>
            <person name="Nandesena K."/>
            <person name="Tiwari R."/>
            <person name="Malfatti S."/>
            <person name="Kiss H."/>
            <person name="Lapidus A."/>
            <person name="Copeland A."/>
            <person name="Nolan M."/>
            <person name="Land M."/>
            <person name="Ivanova N."/>
            <person name="Mavromatis K."/>
            <person name="Markowitz V."/>
            <person name="Kyrpides N."/>
            <person name="Melino V."/>
            <person name="Denton M."/>
            <person name="Yates R."/>
            <person name="Howieson J."/>
        </authorList>
    </citation>
    <scope>NUCLEOTIDE SEQUENCE [LARGE SCALE GENOMIC DNA]</scope>
    <source>
        <strain>WSM2304</strain>
    </source>
</reference>
<feature type="chain" id="PRO_1000129265" description="Trans-aconitate 2-methyltransferase">
    <location>
        <begin position="1"/>
        <end position="256"/>
    </location>
</feature>
<proteinExistence type="inferred from homology"/>
<evidence type="ECO:0000255" key="1">
    <source>
        <dbReference type="HAMAP-Rule" id="MF_00560"/>
    </source>
</evidence>
<name>TAM_RHILW</name>
<sequence length="256" mass="28471">MAWSASQYVKFEDERTRPARDLLAQVPLQKIRRAVDLGCGPGNSTELIIERYGADGVSGLDSDMNMLEAARKRLPGTAFVEADLGSWQPMEPADLLFANAVFQWLPDHLDIFDRLMDGLSPGGVLAVQMPDNLGEPSHLAMEEAAHAGPWKTAFEAKSVRRKGLPAPSAYYSRLITKASRVDVWHTIYNHPMADAAAIVEWVKGTGLMPYLAHAGERYREAFLADYLQRVEKAYPKLSDGRVLLRFPRIFMVAVKG</sequence>
<gene>
    <name evidence="1" type="primary">tam</name>
    <name type="ordered locus">Rleg2_0827</name>
</gene>
<comment type="function">
    <text evidence="1">Catalyzes the S-adenosylmethionine monomethyl esterification of trans-aconitate.</text>
</comment>
<comment type="catalytic activity">
    <reaction evidence="1">
        <text>trans-aconitate + S-adenosyl-L-methionine = (E)-3-(methoxycarbonyl)pent-2-enedioate + S-adenosyl-L-homocysteine</text>
        <dbReference type="Rhea" id="RHEA:14969"/>
        <dbReference type="ChEBI" id="CHEBI:15708"/>
        <dbReference type="ChEBI" id="CHEBI:57470"/>
        <dbReference type="ChEBI" id="CHEBI:57856"/>
        <dbReference type="ChEBI" id="CHEBI:59789"/>
        <dbReference type="EC" id="2.1.1.144"/>
    </reaction>
</comment>
<comment type="subcellular location">
    <subcellularLocation>
        <location evidence="1">Cytoplasm</location>
    </subcellularLocation>
</comment>
<comment type="similarity">
    <text evidence="1">Belongs to the methyltransferase superfamily. Tam family.</text>
</comment>
<organism>
    <name type="scientific">Rhizobium leguminosarum bv. trifolii (strain WSM2304)</name>
    <dbReference type="NCBI Taxonomy" id="395492"/>
    <lineage>
        <taxon>Bacteria</taxon>
        <taxon>Pseudomonadati</taxon>
        <taxon>Pseudomonadota</taxon>
        <taxon>Alphaproteobacteria</taxon>
        <taxon>Hyphomicrobiales</taxon>
        <taxon>Rhizobiaceae</taxon>
        <taxon>Rhizobium/Agrobacterium group</taxon>
        <taxon>Rhizobium</taxon>
    </lineage>
</organism>
<dbReference type="EC" id="2.1.1.144" evidence="1"/>
<dbReference type="EMBL" id="CP001191">
    <property type="protein sequence ID" value="ACI54121.1"/>
    <property type="molecule type" value="Genomic_DNA"/>
</dbReference>
<dbReference type="RefSeq" id="WP_012556994.1">
    <property type="nucleotide sequence ID" value="NC_011369.1"/>
</dbReference>
<dbReference type="SMR" id="B5ZUL2"/>
<dbReference type="STRING" id="395492.Rleg2_0827"/>
<dbReference type="KEGG" id="rlt:Rleg2_0827"/>
<dbReference type="eggNOG" id="COG4106">
    <property type="taxonomic scope" value="Bacteria"/>
</dbReference>
<dbReference type="HOGENOM" id="CLU_037990_5_2_5"/>
<dbReference type="Proteomes" id="UP000008330">
    <property type="component" value="Chromosome"/>
</dbReference>
<dbReference type="GO" id="GO:0005737">
    <property type="term" value="C:cytoplasm"/>
    <property type="evidence" value="ECO:0007669"/>
    <property type="project" value="UniProtKB-SubCell"/>
</dbReference>
<dbReference type="GO" id="GO:0030798">
    <property type="term" value="F:trans-aconitate 2-methyltransferase activity"/>
    <property type="evidence" value="ECO:0007669"/>
    <property type="project" value="UniProtKB-UniRule"/>
</dbReference>
<dbReference type="GO" id="GO:0032259">
    <property type="term" value="P:methylation"/>
    <property type="evidence" value="ECO:0007669"/>
    <property type="project" value="UniProtKB-KW"/>
</dbReference>
<dbReference type="CDD" id="cd02440">
    <property type="entry name" value="AdoMet_MTases"/>
    <property type="match status" value="1"/>
</dbReference>
<dbReference type="Gene3D" id="1.10.150.290">
    <property type="entry name" value="S-adenosyl-L-methionine-dependent methyltransferases"/>
    <property type="match status" value="1"/>
</dbReference>
<dbReference type="Gene3D" id="3.40.50.150">
    <property type="entry name" value="Vaccinia Virus protein VP39"/>
    <property type="match status" value="1"/>
</dbReference>
<dbReference type="HAMAP" id="MF_00560">
    <property type="entry name" value="Tran_acon_Me_trans"/>
    <property type="match status" value="1"/>
</dbReference>
<dbReference type="InterPro" id="IPR041698">
    <property type="entry name" value="Methyltransf_25"/>
</dbReference>
<dbReference type="InterPro" id="IPR029063">
    <property type="entry name" value="SAM-dependent_MTases_sf"/>
</dbReference>
<dbReference type="InterPro" id="IPR023506">
    <property type="entry name" value="Trans-aconitate_MeTrfase"/>
</dbReference>
<dbReference type="InterPro" id="IPR023149">
    <property type="entry name" value="Trans_acon_MeTrfase_C"/>
</dbReference>
<dbReference type="NCBIfam" id="NF002463">
    <property type="entry name" value="PRK01683.1"/>
    <property type="match status" value="1"/>
</dbReference>
<dbReference type="PANTHER" id="PTHR43861:SF1">
    <property type="entry name" value="TRANS-ACONITATE 2-METHYLTRANSFERASE"/>
    <property type="match status" value="1"/>
</dbReference>
<dbReference type="PANTHER" id="PTHR43861">
    <property type="entry name" value="TRANS-ACONITATE 2-METHYLTRANSFERASE-RELATED"/>
    <property type="match status" value="1"/>
</dbReference>
<dbReference type="Pfam" id="PF13649">
    <property type="entry name" value="Methyltransf_25"/>
    <property type="match status" value="1"/>
</dbReference>
<dbReference type="SUPFAM" id="SSF53335">
    <property type="entry name" value="S-adenosyl-L-methionine-dependent methyltransferases"/>
    <property type="match status" value="1"/>
</dbReference>